<sequence>MTELSRARYAELFGPTTGDRIRLADTDLLIEITEDRSGGPGLAGDEAVFGGGKVLRESMGQSRATRADGAPDTVITGAVIVDHWGIVKADIGIRDGRICGIGKAGNPDTMSGVHPDLVVGPSTEIIAGNGRILTAGAIDCHVHFICPQLMDEALGGGITTLIGGGTGPAEGSKATTVTPGAWHLARMLEATDHWPLNIALLGKGNTVSEAAMWEQLRAGASGFKLHEDWGSTPAAIDACLRVADASGVQVALHSDTLNEAGFVEDTLAAIAGRGIHAYHTEGAGGGHAPDIITVAAHPNVLPSSTNPTRPHTVNTLDEHLDMLMVCHHLSPSIPEDLAFAESRIRPSTIAAEDLLHDLGAISMIGSDSQAMGRIGEVVMRTWQTAHVMKRRRGALPGDGAADNARVRRYIAKYTICPAVAHGLDAEIGSVEVGKLADLVLWDPAFFGVRPHAVLKGGAIAWAAMGDANASIPTPQPVLPRPMFGAAAPVAAATSLHFVSEHALADGLAERLAVRRKLVAVKDVRRLTKTDMPLNDAMPRIEVDPDTFTVRVDGEVWAEQPATELPMAQRYFLF</sequence>
<evidence type="ECO:0000255" key="1">
    <source>
        <dbReference type="HAMAP-Rule" id="MF_01953"/>
    </source>
</evidence>
<organism>
    <name type="scientific">Nocardia farcinica (strain IFM 10152)</name>
    <dbReference type="NCBI Taxonomy" id="247156"/>
    <lineage>
        <taxon>Bacteria</taxon>
        <taxon>Bacillati</taxon>
        <taxon>Actinomycetota</taxon>
        <taxon>Actinomycetes</taxon>
        <taxon>Mycobacteriales</taxon>
        <taxon>Nocardiaceae</taxon>
        <taxon>Nocardia</taxon>
    </lineage>
</organism>
<protein>
    <recommendedName>
        <fullName evidence="1">Urease subunit alpha</fullName>
        <ecNumber evidence="1">3.5.1.5</ecNumber>
    </recommendedName>
    <alternativeName>
        <fullName evidence="1">Urea amidohydrolase subunit alpha</fullName>
    </alternativeName>
</protein>
<feature type="chain" id="PRO_0000234160" description="Urease subunit alpha">
    <location>
        <begin position="1"/>
        <end position="573"/>
    </location>
</feature>
<feature type="domain" description="Urease" evidence="1">
    <location>
        <begin position="136"/>
        <end position="573"/>
    </location>
</feature>
<feature type="active site" description="Proton donor" evidence="1">
    <location>
        <position position="327"/>
    </location>
</feature>
<feature type="binding site" evidence="1">
    <location>
        <position position="141"/>
    </location>
    <ligand>
        <name>Ni(2+)</name>
        <dbReference type="ChEBI" id="CHEBI:49786"/>
        <label>1</label>
    </ligand>
</feature>
<feature type="binding site" evidence="1">
    <location>
        <position position="143"/>
    </location>
    <ligand>
        <name>Ni(2+)</name>
        <dbReference type="ChEBI" id="CHEBI:49786"/>
        <label>1</label>
    </ligand>
</feature>
<feature type="binding site" description="via carbamate group" evidence="1">
    <location>
        <position position="224"/>
    </location>
    <ligand>
        <name>Ni(2+)</name>
        <dbReference type="ChEBI" id="CHEBI:49786"/>
        <label>1</label>
    </ligand>
</feature>
<feature type="binding site" description="via carbamate group" evidence="1">
    <location>
        <position position="224"/>
    </location>
    <ligand>
        <name>Ni(2+)</name>
        <dbReference type="ChEBI" id="CHEBI:49786"/>
        <label>2</label>
    </ligand>
</feature>
<feature type="binding site" evidence="1">
    <location>
        <position position="226"/>
    </location>
    <ligand>
        <name>substrate</name>
    </ligand>
</feature>
<feature type="binding site" evidence="1">
    <location>
        <position position="253"/>
    </location>
    <ligand>
        <name>Ni(2+)</name>
        <dbReference type="ChEBI" id="CHEBI:49786"/>
        <label>2</label>
    </ligand>
</feature>
<feature type="binding site" evidence="1">
    <location>
        <position position="279"/>
    </location>
    <ligand>
        <name>Ni(2+)</name>
        <dbReference type="ChEBI" id="CHEBI:49786"/>
        <label>2</label>
    </ligand>
</feature>
<feature type="binding site" evidence="1">
    <location>
        <position position="367"/>
    </location>
    <ligand>
        <name>Ni(2+)</name>
        <dbReference type="ChEBI" id="CHEBI:49786"/>
        <label>1</label>
    </ligand>
</feature>
<feature type="modified residue" description="N6-carboxylysine" evidence="1">
    <location>
        <position position="224"/>
    </location>
</feature>
<dbReference type="EC" id="3.5.1.5" evidence="1"/>
<dbReference type="EMBL" id="AP006618">
    <property type="protein sequence ID" value="BAD57373.1"/>
    <property type="molecule type" value="Genomic_DNA"/>
</dbReference>
<dbReference type="RefSeq" id="WP_011209058.1">
    <property type="nucleotide sequence ID" value="NC_006361.1"/>
</dbReference>
<dbReference type="SMR" id="Q5YWR8"/>
<dbReference type="STRING" id="247156.NFA_25260"/>
<dbReference type="MEROPS" id="M38.982"/>
<dbReference type="GeneID" id="61133271"/>
<dbReference type="KEGG" id="nfa:NFA_25260"/>
<dbReference type="eggNOG" id="COG0804">
    <property type="taxonomic scope" value="Bacteria"/>
</dbReference>
<dbReference type="HOGENOM" id="CLU_000980_0_0_11"/>
<dbReference type="OrthoDB" id="9802793at2"/>
<dbReference type="UniPathway" id="UPA00258">
    <property type="reaction ID" value="UER00370"/>
</dbReference>
<dbReference type="Proteomes" id="UP000006820">
    <property type="component" value="Chromosome"/>
</dbReference>
<dbReference type="GO" id="GO:0005737">
    <property type="term" value="C:cytoplasm"/>
    <property type="evidence" value="ECO:0007669"/>
    <property type="project" value="UniProtKB-SubCell"/>
</dbReference>
<dbReference type="GO" id="GO:0016151">
    <property type="term" value="F:nickel cation binding"/>
    <property type="evidence" value="ECO:0007669"/>
    <property type="project" value="UniProtKB-UniRule"/>
</dbReference>
<dbReference type="GO" id="GO:0009039">
    <property type="term" value="F:urease activity"/>
    <property type="evidence" value="ECO:0007669"/>
    <property type="project" value="UniProtKB-UniRule"/>
</dbReference>
<dbReference type="GO" id="GO:0043419">
    <property type="term" value="P:urea catabolic process"/>
    <property type="evidence" value="ECO:0007669"/>
    <property type="project" value="UniProtKB-UniRule"/>
</dbReference>
<dbReference type="CDD" id="cd00375">
    <property type="entry name" value="Urease_alpha"/>
    <property type="match status" value="1"/>
</dbReference>
<dbReference type="Gene3D" id="3.20.20.140">
    <property type="entry name" value="Metal-dependent hydrolases"/>
    <property type="match status" value="1"/>
</dbReference>
<dbReference type="Gene3D" id="2.30.40.10">
    <property type="entry name" value="Urease, subunit C, domain 1"/>
    <property type="match status" value="1"/>
</dbReference>
<dbReference type="HAMAP" id="MF_01953">
    <property type="entry name" value="Urease_alpha"/>
    <property type="match status" value="1"/>
</dbReference>
<dbReference type="InterPro" id="IPR006680">
    <property type="entry name" value="Amidohydro-rel"/>
</dbReference>
<dbReference type="InterPro" id="IPR011059">
    <property type="entry name" value="Metal-dep_hydrolase_composite"/>
</dbReference>
<dbReference type="InterPro" id="IPR032466">
    <property type="entry name" value="Metal_Hydrolase"/>
</dbReference>
<dbReference type="InterPro" id="IPR011612">
    <property type="entry name" value="Urease_alpha_N_dom"/>
</dbReference>
<dbReference type="InterPro" id="IPR050112">
    <property type="entry name" value="Urease_alpha_subunit"/>
</dbReference>
<dbReference type="InterPro" id="IPR017950">
    <property type="entry name" value="Urease_AS"/>
</dbReference>
<dbReference type="InterPro" id="IPR005848">
    <property type="entry name" value="Urease_asu"/>
</dbReference>
<dbReference type="InterPro" id="IPR017951">
    <property type="entry name" value="Urease_asu_c"/>
</dbReference>
<dbReference type="InterPro" id="IPR029754">
    <property type="entry name" value="Urease_Ni-bd"/>
</dbReference>
<dbReference type="NCBIfam" id="NF009685">
    <property type="entry name" value="PRK13206.1"/>
    <property type="match status" value="1"/>
</dbReference>
<dbReference type="NCBIfam" id="NF009686">
    <property type="entry name" value="PRK13207.1"/>
    <property type="match status" value="1"/>
</dbReference>
<dbReference type="NCBIfam" id="TIGR01792">
    <property type="entry name" value="urease_alph"/>
    <property type="match status" value="1"/>
</dbReference>
<dbReference type="PANTHER" id="PTHR43440">
    <property type="entry name" value="UREASE"/>
    <property type="match status" value="1"/>
</dbReference>
<dbReference type="PANTHER" id="PTHR43440:SF1">
    <property type="entry name" value="UREASE"/>
    <property type="match status" value="1"/>
</dbReference>
<dbReference type="Pfam" id="PF01979">
    <property type="entry name" value="Amidohydro_1"/>
    <property type="match status" value="1"/>
</dbReference>
<dbReference type="Pfam" id="PF00449">
    <property type="entry name" value="Urease_alpha"/>
    <property type="match status" value="1"/>
</dbReference>
<dbReference type="PRINTS" id="PR01752">
    <property type="entry name" value="UREASE"/>
</dbReference>
<dbReference type="SUPFAM" id="SSF51338">
    <property type="entry name" value="Composite domain of metallo-dependent hydrolases"/>
    <property type="match status" value="2"/>
</dbReference>
<dbReference type="SUPFAM" id="SSF51556">
    <property type="entry name" value="Metallo-dependent hydrolases"/>
    <property type="match status" value="1"/>
</dbReference>
<dbReference type="PROSITE" id="PS01120">
    <property type="entry name" value="UREASE_1"/>
    <property type="match status" value="1"/>
</dbReference>
<dbReference type="PROSITE" id="PS00145">
    <property type="entry name" value="UREASE_2"/>
    <property type="match status" value="1"/>
</dbReference>
<dbReference type="PROSITE" id="PS51368">
    <property type="entry name" value="UREASE_3"/>
    <property type="match status" value="1"/>
</dbReference>
<proteinExistence type="inferred from homology"/>
<reference key="1">
    <citation type="journal article" date="2004" name="Proc. Natl. Acad. Sci. U.S.A.">
        <title>The complete genomic sequence of Nocardia farcinica IFM 10152.</title>
        <authorList>
            <person name="Ishikawa J."/>
            <person name="Yamashita A."/>
            <person name="Mikami Y."/>
            <person name="Hoshino Y."/>
            <person name="Kurita H."/>
            <person name="Hotta K."/>
            <person name="Shiba T."/>
            <person name="Hattori M."/>
        </authorList>
    </citation>
    <scope>NUCLEOTIDE SEQUENCE [LARGE SCALE GENOMIC DNA]</scope>
    <source>
        <strain>IFM 10152</strain>
    </source>
</reference>
<accession>Q5YWR8</accession>
<name>URE1_NOCFA</name>
<keyword id="KW-0963">Cytoplasm</keyword>
<keyword id="KW-0378">Hydrolase</keyword>
<keyword id="KW-0479">Metal-binding</keyword>
<keyword id="KW-0533">Nickel</keyword>
<keyword id="KW-1185">Reference proteome</keyword>
<gene>
    <name evidence="1" type="primary">ureC</name>
    <name type="ordered locus">NFA_25260</name>
</gene>
<comment type="catalytic activity">
    <reaction evidence="1">
        <text>urea + 2 H2O + H(+) = hydrogencarbonate + 2 NH4(+)</text>
        <dbReference type="Rhea" id="RHEA:20557"/>
        <dbReference type="ChEBI" id="CHEBI:15377"/>
        <dbReference type="ChEBI" id="CHEBI:15378"/>
        <dbReference type="ChEBI" id="CHEBI:16199"/>
        <dbReference type="ChEBI" id="CHEBI:17544"/>
        <dbReference type="ChEBI" id="CHEBI:28938"/>
        <dbReference type="EC" id="3.5.1.5"/>
    </reaction>
</comment>
<comment type="cofactor">
    <cofactor evidence="1">
        <name>Ni cation</name>
        <dbReference type="ChEBI" id="CHEBI:25516"/>
    </cofactor>
    <text evidence="1">Binds 2 nickel ions per subunit.</text>
</comment>
<comment type="pathway">
    <text evidence="1">Nitrogen metabolism; urea degradation; CO(2) and NH(3) from urea (urease route): step 1/1.</text>
</comment>
<comment type="subunit">
    <text evidence="1">Heterotrimer of UreA (gamma), UreB (beta) and UreC (alpha) subunits. Three heterotrimers associate to form the active enzyme.</text>
</comment>
<comment type="subcellular location">
    <subcellularLocation>
        <location evidence="1">Cytoplasm</location>
    </subcellularLocation>
</comment>
<comment type="PTM">
    <text evidence="1">Carboxylation allows a single lysine to coordinate two nickel ions.</text>
</comment>
<comment type="similarity">
    <text evidence="1">Belongs to the metallo-dependent hydrolases superfamily. Urease alpha subunit family.</text>
</comment>